<proteinExistence type="inferred from homology"/>
<geneLocation type="chloroplast"/>
<keyword id="KW-0150">Chloroplast</keyword>
<keyword id="KW-0934">Plastid</keyword>
<keyword id="KW-0687">Ribonucleoprotein</keyword>
<keyword id="KW-0689">Ribosomal protein</keyword>
<keyword id="KW-0694">RNA-binding</keyword>
<keyword id="KW-0699">rRNA-binding</keyword>
<gene>
    <name evidence="1" type="primary">rps19</name>
</gene>
<reference key="1">
    <citation type="journal article" date="2004" name="Mol. Biol. Evol.">
        <title>Chloroplast phylogeny indicates that bryophytes are monophyletic.</title>
        <authorList>
            <person name="Nishiyama T."/>
            <person name="Wolf P.G."/>
            <person name="Kugita M."/>
            <person name="Sinclair R.B."/>
            <person name="Sugita M."/>
            <person name="Sugiura C."/>
            <person name="Wakasugi T."/>
            <person name="Yamada K."/>
            <person name="Yoshinaga K."/>
            <person name="Yamaguchi K."/>
            <person name="Ueda K."/>
            <person name="Hasebe M."/>
        </authorList>
    </citation>
    <scope>NUCLEOTIDE SEQUENCE [LARGE SCALE GENOMIC DNA]</scope>
    <source>
        <strain>Kingyoku</strain>
    </source>
</reference>
<organism>
    <name type="scientific">Psilotum nudum</name>
    <name type="common">Whisk fern</name>
    <name type="synonym">Lycopodium nudum</name>
    <dbReference type="NCBI Taxonomy" id="3240"/>
    <lineage>
        <taxon>Eukaryota</taxon>
        <taxon>Viridiplantae</taxon>
        <taxon>Streptophyta</taxon>
        <taxon>Embryophyta</taxon>
        <taxon>Tracheophyta</taxon>
        <taxon>Polypodiopsida</taxon>
        <taxon>Ophioglossidae</taxon>
        <taxon>Psilotales</taxon>
        <taxon>Psilotaceae</taxon>
        <taxon>Psilotum</taxon>
    </lineage>
</organism>
<evidence type="ECO:0000255" key="1">
    <source>
        <dbReference type="HAMAP-Rule" id="MF_00531"/>
    </source>
</evidence>
<evidence type="ECO:0000305" key="2"/>
<sequence>MTRSLKKVPFVAHHLWKKIESLNIKKEKRVIITWSRASTIVPGMIGHTIAVYNGREHLPIYVTDRMVGHKLGEFVLTRTFRGHARKDKKSRR</sequence>
<name>RR19_PSINU</name>
<feature type="chain" id="PRO_0000129987" description="Small ribosomal subunit protein uS19c">
    <location>
        <begin position="1"/>
        <end position="92"/>
    </location>
</feature>
<comment type="function">
    <text evidence="1">Protein S19 forms a complex with S13 that binds strongly to the 16S ribosomal RNA.</text>
</comment>
<comment type="subcellular location">
    <subcellularLocation>
        <location>Plastid</location>
        <location>Chloroplast</location>
    </subcellularLocation>
</comment>
<comment type="similarity">
    <text evidence="1">Belongs to the universal ribosomal protein uS19 family.</text>
</comment>
<protein>
    <recommendedName>
        <fullName evidence="1">Small ribosomal subunit protein uS19c</fullName>
    </recommendedName>
    <alternativeName>
        <fullName evidence="2">30S ribosomal protein S19, chloroplastic</fullName>
    </alternativeName>
</protein>
<dbReference type="EMBL" id="AP004638">
    <property type="protein sequence ID" value="BAB84257.1"/>
    <property type="molecule type" value="Genomic_DNA"/>
</dbReference>
<dbReference type="RefSeq" id="NP_569669.1">
    <property type="nucleotide sequence ID" value="NC_003386.1"/>
</dbReference>
<dbReference type="SMR" id="Q8WHY2"/>
<dbReference type="GeneID" id="2545174"/>
<dbReference type="GO" id="GO:0009507">
    <property type="term" value="C:chloroplast"/>
    <property type="evidence" value="ECO:0007669"/>
    <property type="project" value="UniProtKB-SubCell"/>
</dbReference>
<dbReference type="GO" id="GO:0005763">
    <property type="term" value="C:mitochondrial small ribosomal subunit"/>
    <property type="evidence" value="ECO:0007669"/>
    <property type="project" value="TreeGrafter"/>
</dbReference>
<dbReference type="GO" id="GO:0019843">
    <property type="term" value="F:rRNA binding"/>
    <property type="evidence" value="ECO:0007669"/>
    <property type="project" value="UniProtKB-UniRule"/>
</dbReference>
<dbReference type="GO" id="GO:0003735">
    <property type="term" value="F:structural constituent of ribosome"/>
    <property type="evidence" value="ECO:0007669"/>
    <property type="project" value="InterPro"/>
</dbReference>
<dbReference type="GO" id="GO:0000028">
    <property type="term" value="P:ribosomal small subunit assembly"/>
    <property type="evidence" value="ECO:0007669"/>
    <property type="project" value="TreeGrafter"/>
</dbReference>
<dbReference type="GO" id="GO:0006412">
    <property type="term" value="P:translation"/>
    <property type="evidence" value="ECO:0007669"/>
    <property type="project" value="UniProtKB-UniRule"/>
</dbReference>
<dbReference type="FunFam" id="3.30.860.10:FF:000001">
    <property type="entry name" value="30S ribosomal protein S19"/>
    <property type="match status" value="1"/>
</dbReference>
<dbReference type="Gene3D" id="3.30.860.10">
    <property type="entry name" value="30s Ribosomal Protein S19, Chain A"/>
    <property type="match status" value="1"/>
</dbReference>
<dbReference type="HAMAP" id="MF_00531">
    <property type="entry name" value="Ribosomal_uS19"/>
    <property type="match status" value="1"/>
</dbReference>
<dbReference type="InterPro" id="IPR002222">
    <property type="entry name" value="Ribosomal_uS19"/>
</dbReference>
<dbReference type="InterPro" id="IPR005732">
    <property type="entry name" value="Ribosomal_uS19_bac-type"/>
</dbReference>
<dbReference type="InterPro" id="IPR020934">
    <property type="entry name" value="Ribosomal_uS19_CS"/>
</dbReference>
<dbReference type="InterPro" id="IPR023575">
    <property type="entry name" value="Ribosomal_uS19_SF"/>
</dbReference>
<dbReference type="NCBIfam" id="TIGR01050">
    <property type="entry name" value="rpsS_bact"/>
    <property type="match status" value="1"/>
</dbReference>
<dbReference type="PANTHER" id="PTHR11880">
    <property type="entry name" value="RIBOSOMAL PROTEIN S19P FAMILY MEMBER"/>
    <property type="match status" value="1"/>
</dbReference>
<dbReference type="PANTHER" id="PTHR11880:SF8">
    <property type="entry name" value="SMALL RIBOSOMAL SUBUNIT PROTEIN US19M"/>
    <property type="match status" value="1"/>
</dbReference>
<dbReference type="Pfam" id="PF00203">
    <property type="entry name" value="Ribosomal_S19"/>
    <property type="match status" value="1"/>
</dbReference>
<dbReference type="PIRSF" id="PIRSF002144">
    <property type="entry name" value="Ribosomal_S19"/>
    <property type="match status" value="1"/>
</dbReference>
<dbReference type="PRINTS" id="PR00975">
    <property type="entry name" value="RIBOSOMALS19"/>
</dbReference>
<dbReference type="SUPFAM" id="SSF54570">
    <property type="entry name" value="Ribosomal protein S19"/>
    <property type="match status" value="1"/>
</dbReference>
<dbReference type="PROSITE" id="PS00323">
    <property type="entry name" value="RIBOSOMAL_S19"/>
    <property type="match status" value="1"/>
</dbReference>
<accession>Q8WHY2</accession>